<organism>
    <name type="scientific">Burkholderia ambifaria (strain ATCC BAA-244 / DSM 16087 / CCUG 44356 / LMG 19182 / AMMD)</name>
    <name type="common">Burkholderia cepacia (strain AMMD)</name>
    <dbReference type="NCBI Taxonomy" id="339670"/>
    <lineage>
        <taxon>Bacteria</taxon>
        <taxon>Pseudomonadati</taxon>
        <taxon>Pseudomonadota</taxon>
        <taxon>Betaproteobacteria</taxon>
        <taxon>Burkholderiales</taxon>
        <taxon>Burkholderiaceae</taxon>
        <taxon>Burkholderia</taxon>
        <taxon>Burkholderia cepacia complex</taxon>
    </lineage>
</organism>
<keyword id="KW-0012">Acyltransferase</keyword>
<keyword id="KW-0028">Amino-acid biosynthesis</keyword>
<keyword id="KW-0963">Cytoplasm</keyword>
<keyword id="KW-0220">Diaminopimelate biosynthesis</keyword>
<keyword id="KW-0457">Lysine biosynthesis</keyword>
<keyword id="KW-0677">Repeat</keyword>
<keyword id="KW-0808">Transferase</keyword>
<comment type="catalytic activity">
    <reaction evidence="1">
        <text>(S)-2,3,4,5-tetrahydrodipicolinate + succinyl-CoA + H2O = (S)-2-succinylamino-6-oxoheptanedioate + CoA</text>
        <dbReference type="Rhea" id="RHEA:17325"/>
        <dbReference type="ChEBI" id="CHEBI:15377"/>
        <dbReference type="ChEBI" id="CHEBI:15685"/>
        <dbReference type="ChEBI" id="CHEBI:16845"/>
        <dbReference type="ChEBI" id="CHEBI:57287"/>
        <dbReference type="ChEBI" id="CHEBI:57292"/>
        <dbReference type="EC" id="2.3.1.117"/>
    </reaction>
</comment>
<comment type="pathway">
    <text evidence="1">Amino-acid biosynthesis; L-lysine biosynthesis via DAP pathway; LL-2,6-diaminopimelate from (S)-tetrahydrodipicolinate (succinylase route): step 1/3.</text>
</comment>
<comment type="subunit">
    <text evidence="1">Homotrimer.</text>
</comment>
<comment type="subcellular location">
    <subcellularLocation>
        <location evidence="1">Cytoplasm</location>
    </subcellularLocation>
</comment>
<comment type="similarity">
    <text evidence="1">Belongs to the transferase hexapeptide repeat family.</text>
</comment>
<gene>
    <name evidence="1" type="primary">dapD</name>
    <name type="ordered locus">Bamb_2062</name>
</gene>
<name>DAPD_BURCM</name>
<protein>
    <recommendedName>
        <fullName evidence="1">2,3,4,5-tetrahydropyridine-2,6-dicarboxylate N-succinyltransferase</fullName>
        <ecNumber evidence="1">2.3.1.117</ecNumber>
    </recommendedName>
    <alternativeName>
        <fullName evidence="1">Tetrahydrodipicolinate N-succinyltransferase</fullName>
        <shortName evidence="1">THDP succinyltransferase</shortName>
        <shortName evidence="1">THP succinyltransferase</shortName>
        <shortName evidence="1">Tetrahydropicolinate succinylase</shortName>
    </alternativeName>
</protein>
<accession>Q0BE05</accession>
<feature type="chain" id="PRO_1000047126" description="2,3,4,5-tetrahydropyridine-2,6-dicarboxylate N-succinyltransferase">
    <location>
        <begin position="1"/>
        <end position="275"/>
    </location>
</feature>
<feature type="binding site" evidence="1">
    <location>
        <position position="106"/>
    </location>
    <ligand>
        <name>substrate</name>
    </ligand>
</feature>
<feature type="binding site" evidence="1">
    <location>
        <position position="143"/>
    </location>
    <ligand>
        <name>substrate</name>
    </ligand>
</feature>
<sequence length="275" mass="29480">MSQQLQQIIDTAWENRAELSPKAAPADVREAVAHALEQLDKGALRVAEKIDGNWTVHQWLKKAVLLSFRLEDNAPMPAGGYSQFYDKVPSKFANYTAEDFAAGGFRVVPPAIARRGSFIAKNVVLMPSYTNIGAYVDEGTMVDTWATVGSCAQIGKNVHLSGGVGIGGVLEPLQANPVIIEDNCFIGARSEVVEGVIVEENSVISMGVYLGQSTKIYDRETGEVSYGRIPAGSVVVAGNLPSKDGSHSLYCAVIVKKVDAKTRAKVGLNELLRGD</sequence>
<reference key="1">
    <citation type="submission" date="2006-08" db="EMBL/GenBank/DDBJ databases">
        <title>Complete sequence of chromosome 1 of Burkholderia cepacia AMMD.</title>
        <authorList>
            <person name="Copeland A."/>
            <person name="Lucas S."/>
            <person name="Lapidus A."/>
            <person name="Barry K."/>
            <person name="Detter J.C."/>
            <person name="Glavina del Rio T."/>
            <person name="Hammon N."/>
            <person name="Israni S."/>
            <person name="Pitluck S."/>
            <person name="Bruce D."/>
            <person name="Chain P."/>
            <person name="Malfatti S."/>
            <person name="Shin M."/>
            <person name="Vergez L."/>
            <person name="Schmutz J."/>
            <person name="Larimer F."/>
            <person name="Land M."/>
            <person name="Hauser L."/>
            <person name="Kyrpides N."/>
            <person name="Kim E."/>
            <person name="Parke J."/>
            <person name="Coenye T."/>
            <person name="Konstantinidis K."/>
            <person name="Ramette A."/>
            <person name="Tiedje J."/>
            <person name="Richardson P."/>
        </authorList>
    </citation>
    <scope>NUCLEOTIDE SEQUENCE [LARGE SCALE GENOMIC DNA]</scope>
    <source>
        <strain>ATCC BAA-244 / DSM 16087 / CCUG 44356 / LMG 19182 / AMMD</strain>
    </source>
</reference>
<proteinExistence type="inferred from homology"/>
<dbReference type="EC" id="2.3.1.117" evidence="1"/>
<dbReference type="EMBL" id="CP000440">
    <property type="protein sequence ID" value="ABI87618.1"/>
    <property type="molecule type" value="Genomic_DNA"/>
</dbReference>
<dbReference type="RefSeq" id="WP_011657294.1">
    <property type="nucleotide sequence ID" value="NZ_CP009798.1"/>
</dbReference>
<dbReference type="SMR" id="Q0BE05"/>
<dbReference type="GeneID" id="93085740"/>
<dbReference type="KEGG" id="bam:Bamb_2062"/>
<dbReference type="PATRIC" id="fig|339670.21.peg.2880"/>
<dbReference type="eggNOG" id="COG2171">
    <property type="taxonomic scope" value="Bacteria"/>
</dbReference>
<dbReference type="UniPathway" id="UPA00034">
    <property type="reaction ID" value="UER00019"/>
</dbReference>
<dbReference type="Proteomes" id="UP000000662">
    <property type="component" value="Chromosome 1"/>
</dbReference>
<dbReference type="GO" id="GO:0005737">
    <property type="term" value="C:cytoplasm"/>
    <property type="evidence" value="ECO:0007669"/>
    <property type="project" value="UniProtKB-SubCell"/>
</dbReference>
<dbReference type="GO" id="GO:0008666">
    <property type="term" value="F:2,3,4,5-tetrahydropyridine-2,6-dicarboxylate N-succinyltransferase activity"/>
    <property type="evidence" value="ECO:0007669"/>
    <property type="project" value="UniProtKB-UniRule"/>
</dbReference>
<dbReference type="GO" id="GO:0016779">
    <property type="term" value="F:nucleotidyltransferase activity"/>
    <property type="evidence" value="ECO:0007669"/>
    <property type="project" value="TreeGrafter"/>
</dbReference>
<dbReference type="GO" id="GO:0019877">
    <property type="term" value="P:diaminopimelate biosynthetic process"/>
    <property type="evidence" value="ECO:0007669"/>
    <property type="project" value="UniProtKB-UniRule"/>
</dbReference>
<dbReference type="GO" id="GO:0009089">
    <property type="term" value="P:lysine biosynthetic process via diaminopimelate"/>
    <property type="evidence" value="ECO:0007669"/>
    <property type="project" value="UniProtKB-UniRule"/>
</dbReference>
<dbReference type="CDD" id="cd03350">
    <property type="entry name" value="LbH_THP_succinylT"/>
    <property type="match status" value="1"/>
</dbReference>
<dbReference type="Gene3D" id="2.160.10.10">
    <property type="entry name" value="Hexapeptide repeat proteins"/>
    <property type="match status" value="1"/>
</dbReference>
<dbReference type="Gene3D" id="1.10.166.10">
    <property type="entry name" value="Tetrahydrodipicolinate-N-succinyltransferase, N-terminal domain"/>
    <property type="match status" value="1"/>
</dbReference>
<dbReference type="HAMAP" id="MF_00811">
    <property type="entry name" value="DapD"/>
    <property type="match status" value="1"/>
</dbReference>
<dbReference type="InterPro" id="IPR005664">
    <property type="entry name" value="DapD_Trfase_Hexpep_rpt_fam"/>
</dbReference>
<dbReference type="InterPro" id="IPR001451">
    <property type="entry name" value="Hexapep"/>
</dbReference>
<dbReference type="InterPro" id="IPR018357">
    <property type="entry name" value="Hexapep_transf_CS"/>
</dbReference>
<dbReference type="InterPro" id="IPR023180">
    <property type="entry name" value="THP_succinylTrfase_dom1"/>
</dbReference>
<dbReference type="InterPro" id="IPR037133">
    <property type="entry name" value="THP_succinylTrfase_N_sf"/>
</dbReference>
<dbReference type="InterPro" id="IPR011004">
    <property type="entry name" value="Trimer_LpxA-like_sf"/>
</dbReference>
<dbReference type="NCBIfam" id="TIGR00965">
    <property type="entry name" value="dapD"/>
    <property type="match status" value="1"/>
</dbReference>
<dbReference type="NCBIfam" id="NF008808">
    <property type="entry name" value="PRK11830.1"/>
    <property type="match status" value="1"/>
</dbReference>
<dbReference type="PANTHER" id="PTHR19136:SF52">
    <property type="entry name" value="2,3,4,5-TETRAHYDROPYRIDINE-2,6-DICARBOXYLATE N-SUCCINYLTRANSFERASE"/>
    <property type="match status" value="1"/>
</dbReference>
<dbReference type="PANTHER" id="PTHR19136">
    <property type="entry name" value="MOLYBDENUM COFACTOR GUANYLYLTRANSFERASE"/>
    <property type="match status" value="1"/>
</dbReference>
<dbReference type="Pfam" id="PF14602">
    <property type="entry name" value="Hexapep_2"/>
    <property type="match status" value="1"/>
</dbReference>
<dbReference type="Pfam" id="PF14805">
    <property type="entry name" value="THDPS_N_2"/>
    <property type="match status" value="1"/>
</dbReference>
<dbReference type="SUPFAM" id="SSF51161">
    <property type="entry name" value="Trimeric LpxA-like enzymes"/>
    <property type="match status" value="1"/>
</dbReference>
<dbReference type="PROSITE" id="PS00101">
    <property type="entry name" value="HEXAPEP_TRANSFERASES"/>
    <property type="match status" value="1"/>
</dbReference>
<evidence type="ECO:0000255" key="1">
    <source>
        <dbReference type="HAMAP-Rule" id="MF_00811"/>
    </source>
</evidence>